<name>RS18_CHLL3</name>
<protein>
    <recommendedName>
        <fullName evidence="1">Small ribosomal subunit protein bS18</fullName>
    </recommendedName>
    <alternativeName>
        <fullName evidence="3">30S ribosomal protein S18</fullName>
    </alternativeName>
</protein>
<proteinExistence type="inferred from homology"/>
<keyword id="KW-1185">Reference proteome</keyword>
<keyword id="KW-0687">Ribonucleoprotein</keyword>
<keyword id="KW-0689">Ribosomal protein</keyword>
<keyword id="KW-0694">RNA-binding</keyword>
<keyword id="KW-0699">rRNA-binding</keyword>
<accession>Q3B6M5</accession>
<organism>
    <name type="scientific">Chlorobium luteolum (strain DSM 273 / BCRC 81028 / 2530)</name>
    <name type="common">Pelodictyon luteolum</name>
    <dbReference type="NCBI Taxonomy" id="319225"/>
    <lineage>
        <taxon>Bacteria</taxon>
        <taxon>Pseudomonadati</taxon>
        <taxon>Chlorobiota</taxon>
        <taxon>Chlorobiia</taxon>
        <taxon>Chlorobiales</taxon>
        <taxon>Chlorobiaceae</taxon>
        <taxon>Chlorobium/Pelodictyon group</taxon>
        <taxon>Pelodictyon</taxon>
    </lineage>
</organism>
<dbReference type="EMBL" id="CP000096">
    <property type="protein sequence ID" value="ABB23006.1"/>
    <property type="molecule type" value="Genomic_DNA"/>
</dbReference>
<dbReference type="RefSeq" id="WP_011356882.1">
    <property type="nucleotide sequence ID" value="NC_007512.1"/>
</dbReference>
<dbReference type="SMR" id="Q3B6M5"/>
<dbReference type="STRING" id="319225.Plut_0116"/>
<dbReference type="KEGG" id="plt:Plut_0116"/>
<dbReference type="eggNOG" id="COG0238">
    <property type="taxonomic scope" value="Bacteria"/>
</dbReference>
<dbReference type="HOGENOM" id="CLU_148710_0_3_10"/>
<dbReference type="Proteomes" id="UP000002709">
    <property type="component" value="Chromosome"/>
</dbReference>
<dbReference type="GO" id="GO:1990904">
    <property type="term" value="C:ribonucleoprotein complex"/>
    <property type="evidence" value="ECO:0007669"/>
    <property type="project" value="UniProtKB-KW"/>
</dbReference>
<dbReference type="GO" id="GO:0005840">
    <property type="term" value="C:ribosome"/>
    <property type="evidence" value="ECO:0007669"/>
    <property type="project" value="UniProtKB-KW"/>
</dbReference>
<dbReference type="GO" id="GO:0070181">
    <property type="term" value="F:small ribosomal subunit rRNA binding"/>
    <property type="evidence" value="ECO:0007669"/>
    <property type="project" value="TreeGrafter"/>
</dbReference>
<dbReference type="GO" id="GO:0003735">
    <property type="term" value="F:structural constituent of ribosome"/>
    <property type="evidence" value="ECO:0007669"/>
    <property type="project" value="InterPro"/>
</dbReference>
<dbReference type="GO" id="GO:0006412">
    <property type="term" value="P:translation"/>
    <property type="evidence" value="ECO:0007669"/>
    <property type="project" value="UniProtKB-UniRule"/>
</dbReference>
<dbReference type="Gene3D" id="4.10.640.10">
    <property type="entry name" value="Ribosomal protein S18"/>
    <property type="match status" value="1"/>
</dbReference>
<dbReference type="HAMAP" id="MF_00270">
    <property type="entry name" value="Ribosomal_bS18"/>
    <property type="match status" value="1"/>
</dbReference>
<dbReference type="InterPro" id="IPR001648">
    <property type="entry name" value="Ribosomal_bS18"/>
</dbReference>
<dbReference type="InterPro" id="IPR036870">
    <property type="entry name" value="Ribosomal_bS18_sf"/>
</dbReference>
<dbReference type="NCBIfam" id="TIGR00165">
    <property type="entry name" value="S18"/>
    <property type="match status" value="1"/>
</dbReference>
<dbReference type="PANTHER" id="PTHR13479">
    <property type="entry name" value="30S RIBOSOMAL PROTEIN S18"/>
    <property type="match status" value="1"/>
</dbReference>
<dbReference type="PANTHER" id="PTHR13479:SF40">
    <property type="entry name" value="SMALL RIBOSOMAL SUBUNIT PROTEIN BS18M"/>
    <property type="match status" value="1"/>
</dbReference>
<dbReference type="Pfam" id="PF01084">
    <property type="entry name" value="Ribosomal_S18"/>
    <property type="match status" value="1"/>
</dbReference>
<dbReference type="PRINTS" id="PR00974">
    <property type="entry name" value="RIBOSOMALS18"/>
</dbReference>
<dbReference type="SUPFAM" id="SSF46911">
    <property type="entry name" value="Ribosomal protein S18"/>
    <property type="match status" value="1"/>
</dbReference>
<comment type="function">
    <text evidence="1">Binds as a heterodimer with protein bS6 to the central domain of the 16S rRNA, where it helps stabilize the platform of the 30S subunit.</text>
</comment>
<comment type="subunit">
    <text evidence="1">Part of the 30S ribosomal subunit. Forms a tight heterodimer with protein bS6.</text>
</comment>
<comment type="similarity">
    <text evidence="1">Belongs to the bacterial ribosomal protein bS18 family.</text>
</comment>
<sequence>MKPMRQKNTRAQGNKSISNALASKRKVSKNQVVFFDYRDERKLKRFINDQGKIIPRRITGLTAKEQNLLTHSVKWARFLAVIPYVADEYK</sequence>
<evidence type="ECO:0000255" key="1">
    <source>
        <dbReference type="HAMAP-Rule" id="MF_00270"/>
    </source>
</evidence>
<evidence type="ECO:0000256" key="2">
    <source>
        <dbReference type="SAM" id="MobiDB-lite"/>
    </source>
</evidence>
<evidence type="ECO:0000305" key="3"/>
<feature type="chain" id="PRO_0000345525" description="Small ribosomal subunit protein bS18">
    <location>
        <begin position="1"/>
        <end position="90"/>
    </location>
</feature>
<feature type="region of interest" description="Disordered" evidence="2">
    <location>
        <begin position="1"/>
        <end position="23"/>
    </location>
</feature>
<feature type="compositionally biased region" description="Polar residues" evidence="2">
    <location>
        <begin position="9"/>
        <end position="21"/>
    </location>
</feature>
<gene>
    <name evidence="1" type="primary">rpsR</name>
    <name type="ordered locus">Plut_0116</name>
</gene>
<reference key="1">
    <citation type="submission" date="2005-08" db="EMBL/GenBank/DDBJ databases">
        <title>Complete sequence of Pelodictyon luteolum DSM 273.</title>
        <authorList>
            <consortium name="US DOE Joint Genome Institute"/>
            <person name="Copeland A."/>
            <person name="Lucas S."/>
            <person name="Lapidus A."/>
            <person name="Barry K."/>
            <person name="Detter J.C."/>
            <person name="Glavina T."/>
            <person name="Hammon N."/>
            <person name="Israni S."/>
            <person name="Pitluck S."/>
            <person name="Bryant D."/>
            <person name="Schmutz J."/>
            <person name="Larimer F."/>
            <person name="Land M."/>
            <person name="Kyrpides N."/>
            <person name="Ivanova N."/>
            <person name="Richardson P."/>
        </authorList>
    </citation>
    <scope>NUCLEOTIDE SEQUENCE [LARGE SCALE GENOMIC DNA]</scope>
    <source>
        <strain>DSM 273 / BCRC 81028 / 2530</strain>
    </source>
</reference>